<name>ATPD_DESOH</name>
<organism>
    <name type="scientific">Desulfosudis oleivorans (strain DSM 6200 / JCM 39069 / Hxd3)</name>
    <name type="common">Desulfococcus oleovorans</name>
    <dbReference type="NCBI Taxonomy" id="96561"/>
    <lineage>
        <taxon>Bacteria</taxon>
        <taxon>Pseudomonadati</taxon>
        <taxon>Thermodesulfobacteriota</taxon>
        <taxon>Desulfobacteria</taxon>
        <taxon>Desulfobacterales</taxon>
        <taxon>Desulfosudaceae</taxon>
        <taxon>Desulfosudis</taxon>
    </lineage>
</organism>
<evidence type="ECO:0000255" key="1">
    <source>
        <dbReference type="HAMAP-Rule" id="MF_01416"/>
    </source>
</evidence>
<sequence>MKNYVIQRRYAKALLLIGKEDNNAEQYKEELNGFVSVLDMEKAFESAITNPLYPVEARRKVLDMVIEKLGVSVMMRSFLALLFEKRRIQHVRGINEVYQNLVDELKGIVRADVVSAGELSDDVVEKIRASLSKMTGKQVIVDIAQDPTLIGGIVTKVGDMVLDGSIKTQLSNMKESLKKGERV</sequence>
<protein>
    <recommendedName>
        <fullName evidence="1">ATP synthase subunit delta</fullName>
    </recommendedName>
    <alternativeName>
        <fullName evidence="1">ATP synthase F(1) sector subunit delta</fullName>
    </alternativeName>
    <alternativeName>
        <fullName evidence="1">F-type ATPase subunit delta</fullName>
        <shortName evidence="1">F-ATPase subunit delta</shortName>
    </alternativeName>
</protein>
<keyword id="KW-0066">ATP synthesis</keyword>
<keyword id="KW-0997">Cell inner membrane</keyword>
<keyword id="KW-1003">Cell membrane</keyword>
<keyword id="KW-0139">CF(1)</keyword>
<keyword id="KW-0375">Hydrogen ion transport</keyword>
<keyword id="KW-0406">Ion transport</keyword>
<keyword id="KW-0472">Membrane</keyword>
<keyword id="KW-1185">Reference proteome</keyword>
<keyword id="KW-0813">Transport</keyword>
<reference key="1">
    <citation type="submission" date="2007-10" db="EMBL/GenBank/DDBJ databases">
        <title>Complete sequence of Desulfococcus oleovorans Hxd3.</title>
        <authorList>
            <consortium name="US DOE Joint Genome Institute"/>
            <person name="Copeland A."/>
            <person name="Lucas S."/>
            <person name="Lapidus A."/>
            <person name="Barry K."/>
            <person name="Glavina del Rio T."/>
            <person name="Dalin E."/>
            <person name="Tice H."/>
            <person name="Pitluck S."/>
            <person name="Kiss H."/>
            <person name="Brettin T."/>
            <person name="Bruce D."/>
            <person name="Detter J.C."/>
            <person name="Han C."/>
            <person name="Schmutz J."/>
            <person name="Larimer F."/>
            <person name="Land M."/>
            <person name="Hauser L."/>
            <person name="Kyrpides N."/>
            <person name="Kim E."/>
            <person name="Wawrik B."/>
            <person name="Richardson P."/>
        </authorList>
    </citation>
    <scope>NUCLEOTIDE SEQUENCE [LARGE SCALE GENOMIC DNA]</scope>
    <source>
        <strain>DSM 6200 / JCM 39069 / Hxd3</strain>
    </source>
</reference>
<comment type="function">
    <text evidence="1">F(1)F(0) ATP synthase produces ATP from ADP in the presence of a proton or sodium gradient. F-type ATPases consist of two structural domains, F(1) containing the extramembraneous catalytic core and F(0) containing the membrane proton channel, linked together by a central stalk and a peripheral stalk. During catalysis, ATP synthesis in the catalytic domain of F(1) is coupled via a rotary mechanism of the central stalk subunits to proton translocation.</text>
</comment>
<comment type="function">
    <text evidence="1">This protein is part of the stalk that links CF(0) to CF(1). It either transmits conformational changes from CF(0) to CF(1) or is implicated in proton conduction.</text>
</comment>
<comment type="subunit">
    <text evidence="1">F-type ATPases have 2 components, F(1) - the catalytic core - and F(0) - the membrane proton channel. F(1) has five subunits: alpha(3), beta(3), gamma(1), delta(1), epsilon(1). F(0) has three main subunits: a(1), b(2) and c(10-14). The alpha and beta chains form an alternating ring which encloses part of the gamma chain. F(1) is attached to F(0) by a central stalk formed by the gamma and epsilon chains, while a peripheral stalk is formed by the delta and b chains.</text>
</comment>
<comment type="subcellular location">
    <subcellularLocation>
        <location evidence="1">Cell inner membrane</location>
        <topology evidence="1">Peripheral membrane protein</topology>
    </subcellularLocation>
</comment>
<comment type="similarity">
    <text evidence="1">Belongs to the ATPase delta chain family.</text>
</comment>
<dbReference type="EMBL" id="CP000859">
    <property type="protein sequence ID" value="ABW66410.1"/>
    <property type="molecule type" value="Genomic_DNA"/>
</dbReference>
<dbReference type="RefSeq" id="WP_012174029.1">
    <property type="nucleotide sequence ID" value="NC_009943.1"/>
</dbReference>
<dbReference type="SMR" id="A8ZU98"/>
<dbReference type="STRING" id="96561.Dole_0600"/>
<dbReference type="KEGG" id="dol:Dole_0600"/>
<dbReference type="eggNOG" id="COG0712">
    <property type="taxonomic scope" value="Bacteria"/>
</dbReference>
<dbReference type="HOGENOM" id="CLU_085114_1_1_7"/>
<dbReference type="OrthoDB" id="9802471at2"/>
<dbReference type="Proteomes" id="UP000008561">
    <property type="component" value="Chromosome"/>
</dbReference>
<dbReference type="GO" id="GO:0005886">
    <property type="term" value="C:plasma membrane"/>
    <property type="evidence" value="ECO:0007669"/>
    <property type="project" value="UniProtKB-SubCell"/>
</dbReference>
<dbReference type="GO" id="GO:0045259">
    <property type="term" value="C:proton-transporting ATP synthase complex"/>
    <property type="evidence" value="ECO:0007669"/>
    <property type="project" value="UniProtKB-KW"/>
</dbReference>
<dbReference type="GO" id="GO:0046933">
    <property type="term" value="F:proton-transporting ATP synthase activity, rotational mechanism"/>
    <property type="evidence" value="ECO:0007669"/>
    <property type="project" value="UniProtKB-UniRule"/>
</dbReference>
<dbReference type="Gene3D" id="1.10.520.20">
    <property type="entry name" value="N-terminal domain of the delta subunit of the F1F0-ATP synthase"/>
    <property type="match status" value="1"/>
</dbReference>
<dbReference type="HAMAP" id="MF_01416">
    <property type="entry name" value="ATP_synth_delta_bact"/>
    <property type="match status" value="1"/>
</dbReference>
<dbReference type="InterPro" id="IPR026015">
    <property type="entry name" value="ATP_synth_OSCP/delta_N_sf"/>
</dbReference>
<dbReference type="InterPro" id="IPR000711">
    <property type="entry name" value="ATPase_OSCP/dsu"/>
</dbReference>
<dbReference type="NCBIfam" id="TIGR01145">
    <property type="entry name" value="ATP_synt_delta"/>
    <property type="match status" value="1"/>
</dbReference>
<dbReference type="PANTHER" id="PTHR11910">
    <property type="entry name" value="ATP SYNTHASE DELTA CHAIN"/>
    <property type="match status" value="1"/>
</dbReference>
<dbReference type="Pfam" id="PF00213">
    <property type="entry name" value="OSCP"/>
    <property type="match status" value="1"/>
</dbReference>
<dbReference type="PRINTS" id="PR00125">
    <property type="entry name" value="ATPASEDELTA"/>
</dbReference>
<dbReference type="SUPFAM" id="SSF47928">
    <property type="entry name" value="N-terminal domain of the delta subunit of the F1F0-ATP synthase"/>
    <property type="match status" value="1"/>
</dbReference>
<accession>A8ZU98</accession>
<gene>
    <name evidence="1" type="primary">atpH</name>
    <name type="ordered locus">Dole_0600</name>
</gene>
<feature type="chain" id="PRO_0000382095" description="ATP synthase subunit delta">
    <location>
        <begin position="1"/>
        <end position="183"/>
    </location>
</feature>
<proteinExistence type="inferred from homology"/>